<sequence>MDKETIKAHKISDEEYAQILEILGREPNLLELGVISAMWSEHCSYKSSKKYLNGFPTKAPWVIQGPGENAGVIDIGQGMAAVFKVESHNHPSFIEPFAGAATGVGGILRDVFTMGARVVAGLNSLKFGDIHDEKCGKHQKYLVKGVVNGISHYGNCMGVPTIGGECAFDECFNGNILVNAFALGVCKSEDIFYAKAEGVGNPVIYVGSKTGRDGLGGAVMASDSFNEESKSLRPTVQIGDPFSEKLLMEACLELFKTDYIVGIQDMGAAGLTSSSFEMAGRSGSGMKLYLDKTPMRESGMTPYELMLSESQERMLICAKKGYEDKVIEIFKKWDLDAVVMGEVTNTGKMELFWHDELVGLIPIEPLSEKAPILSRPTSEPKYLSEIKNYKFELKSSVQELFIQMLQNENINNKAFIYDQFDSSVQTNTIKADGRLGASVIRIKENGASVAMAIECNSRLNYVNPKIGAALAVASAGRKVACTGAKPLAISDCLNYGNPQNPEVMWQFAQGCEGIKEACKELNTPVVSGNVSLYNETEGVSIYPSPTIVSVGVLEDANKTLKASFEKENLSVYLLGESLGEFSGSMVMKIQDKKVSGSLKELDYKAELALWDLLYKANQNSLLECANSVGIGGIAMTLAKMFAISSVGANLTSDFDDEKMIFDESASRAIIGLSKENEEAFLNLAKEFGVKAYKLGVSTSQKHFKLDSIELSKAELDKLYFESFKEQIQ</sequence>
<keyword id="KW-0067">ATP-binding</keyword>
<keyword id="KW-0963">Cytoplasm</keyword>
<keyword id="KW-0436">Ligase</keyword>
<keyword id="KW-0460">Magnesium</keyword>
<keyword id="KW-0479">Metal-binding</keyword>
<keyword id="KW-0547">Nucleotide-binding</keyword>
<keyword id="KW-0658">Purine biosynthesis</keyword>
<reference key="1">
    <citation type="submission" date="2006-12" db="EMBL/GenBank/DDBJ databases">
        <authorList>
            <person name="Fouts D.E."/>
            <person name="Nelson K.E."/>
            <person name="Sebastian Y."/>
        </authorList>
    </citation>
    <scope>NUCLEOTIDE SEQUENCE [LARGE SCALE GENOMIC DNA]</scope>
    <source>
        <strain>81-176</strain>
    </source>
</reference>
<gene>
    <name evidence="1" type="primary">purL</name>
    <name type="ordered locus">CJJ81176_0978</name>
</gene>
<name>PURL_CAMJJ</name>
<feature type="chain" id="PRO_1000050305" description="Phosphoribosylformylglycinamidine synthase subunit PurL">
    <location>
        <begin position="1"/>
        <end position="728"/>
    </location>
</feature>
<feature type="active site" evidence="1">
    <location>
        <position position="42"/>
    </location>
</feature>
<feature type="active site" description="Proton acceptor" evidence="1">
    <location>
        <position position="88"/>
    </location>
</feature>
<feature type="binding site" evidence="1">
    <location>
        <position position="45"/>
    </location>
    <ligand>
        <name>ATP</name>
        <dbReference type="ChEBI" id="CHEBI:30616"/>
    </ligand>
</feature>
<feature type="binding site" evidence="1">
    <location>
        <position position="84"/>
    </location>
    <ligand>
        <name>ATP</name>
        <dbReference type="ChEBI" id="CHEBI:30616"/>
    </ligand>
</feature>
<feature type="binding site" evidence="1">
    <location>
        <position position="86"/>
    </location>
    <ligand>
        <name>Mg(2+)</name>
        <dbReference type="ChEBI" id="CHEBI:18420"/>
        <label>1</label>
    </ligand>
</feature>
<feature type="binding site" evidence="1">
    <location>
        <begin position="87"/>
        <end position="90"/>
    </location>
    <ligand>
        <name>substrate</name>
    </ligand>
</feature>
<feature type="binding site" evidence="1">
    <location>
        <position position="109"/>
    </location>
    <ligand>
        <name>substrate</name>
    </ligand>
</feature>
<feature type="binding site" evidence="1">
    <location>
        <position position="110"/>
    </location>
    <ligand>
        <name>Mg(2+)</name>
        <dbReference type="ChEBI" id="CHEBI:18420"/>
        <label>2</label>
    </ligand>
</feature>
<feature type="binding site" evidence="1">
    <location>
        <position position="237"/>
    </location>
    <ligand>
        <name>substrate</name>
    </ligand>
</feature>
<feature type="binding site" evidence="1">
    <location>
        <position position="265"/>
    </location>
    <ligand>
        <name>Mg(2+)</name>
        <dbReference type="ChEBI" id="CHEBI:18420"/>
        <label>2</label>
    </ligand>
</feature>
<feature type="binding site" evidence="1">
    <location>
        <begin position="309"/>
        <end position="311"/>
    </location>
    <ligand>
        <name>substrate</name>
    </ligand>
</feature>
<feature type="binding site" evidence="1">
    <location>
        <position position="491"/>
    </location>
    <ligand>
        <name>ATP</name>
        <dbReference type="ChEBI" id="CHEBI:30616"/>
    </ligand>
</feature>
<feature type="binding site" evidence="1">
    <location>
        <position position="528"/>
    </location>
    <ligand>
        <name>ATP</name>
        <dbReference type="ChEBI" id="CHEBI:30616"/>
    </ligand>
</feature>
<feature type="binding site" evidence="1">
    <location>
        <position position="529"/>
    </location>
    <ligand>
        <name>Mg(2+)</name>
        <dbReference type="ChEBI" id="CHEBI:18420"/>
        <label>1</label>
    </ligand>
</feature>
<feature type="binding site" evidence="1">
    <location>
        <position position="531"/>
    </location>
    <ligand>
        <name>substrate</name>
    </ligand>
</feature>
<protein>
    <recommendedName>
        <fullName evidence="1">Phosphoribosylformylglycinamidine synthase subunit PurL</fullName>
        <shortName evidence="1">FGAM synthase</shortName>
        <ecNumber evidence="1">6.3.5.3</ecNumber>
    </recommendedName>
    <alternativeName>
        <fullName evidence="1">Formylglycinamide ribonucleotide amidotransferase subunit II</fullName>
        <shortName evidence="1">FGAR amidotransferase II</shortName>
        <shortName evidence="1">FGAR-AT II</shortName>
    </alternativeName>
    <alternativeName>
        <fullName evidence="1">Glutamine amidotransferase PurL</fullName>
    </alternativeName>
    <alternativeName>
        <fullName evidence="1">Phosphoribosylformylglycinamidine synthase subunit II</fullName>
    </alternativeName>
</protein>
<accession>A1VZU6</accession>
<proteinExistence type="inferred from homology"/>
<dbReference type="EC" id="6.3.5.3" evidence="1"/>
<dbReference type="EMBL" id="CP000538">
    <property type="protein sequence ID" value="EAQ71846.1"/>
    <property type="molecule type" value="Genomic_DNA"/>
</dbReference>
<dbReference type="RefSeq" id="WP_002853351.1">
    <property type="nucleotide sequence ID" value="NC_008787.1"/>
</dbReference>
<dbReference type="SMR" id="A1VZU6"/>
<dbReference type="KEGG" id="cjj:CJJ81176_0978"/>
<dbReference type="eggNOG" id="COG0046">
    <property type="taxonomic scope" value="Bacteria"/>
</dbReference>
<dbReference type="HOGENOM" id="CLU_003100_0_1_7"/>
<dbReference type="UniPathway" id="UPA00074">
    <property type="reaction ID" value="UER00128"/>
</dbReference>
<dbReference type="Proteomes" id="UP000000646">
    <property type="component" value="Chromosome"/>
</dbReference>
<dbReference type="GO" id="GO:0005737">
    <property type="term" value="C:cytoplasm"/>
    <property type="evidence" value="ECO:0007669"/>
    <property type="project" value="UniProtKB-SubCell"/>
</dbReference>
<dbReference type="GO" id="GO:0005524">
    <property type="term" value="F:ATP binding"/>
    <property type="evidence" value="ECO:0007669"/>
    <property type="project" value="UniProtKB-UniRule"/>
</dbReference>
<dbReference type="GO" id="GO:0000287">
    <property type="term" value="F:magnesium ion binding"/>
    <property type="evidence" value="ECO:0007669"/>
    <property type="project" value="UniProtKB-UniRule"/>
</dbReference>
<dbReference type="GO" id="GO:0004642">
    <property type="term" value="F:phosphoribosylformylglycinamidine synthase activity"/>
    <property type="evidence" value="ECO:0007669"/>
    <property type="project" value="UniProtKB-UniRule"/>
</dbReference>
<dbReference type="GO" id="GO:0006189">
    <property type="term" value="P:'de novo' IMP biosynthetic process"/>
    <property type="evidence" value="ECO:0007669"/>
    <property type="project" value="UniProtKB-UniRule"/>
</dbReference>
<dbReference type="CDD" id="cd02203">
    <property type="entry name" value="PurL_repeat1"/>
    <property type="match status" value="1"/>
</dbReference>
<dbReference type="CDD" id="cd02204">
    <property type="entry name" value="PurL_repeat2"/>
    <property type="match status" value="1"/>
</dbReference>
<dbReference type="FunFam" id="3.30.1330.10:FF:000004">
    <property type="entry name" value="Phosphoribosylformylglycinamidine synthase subunit PurL"/>
    <property type="match status" value="1"/>
</dbReference>
<dbReference type="Gene3D" id="3.90.650.10">
    <property type="entry name" value="PurM-like C-terminal domain"/>
    <property type="match status" value="2"/>
</dbReference>
<dbReference type="Gene3D" id="3.30.1330.10">
    <property type="entry name" value="PurM-like, N-terminal domain"/>
    <property type="match status" value="2"/>
</dbReference>
<dbReference type="HAMAP" id="MF_00420">
    <property type="entry name" value="PurL_2"/>
    <property type="match status" value="1"/>
</dbReference>
<dbReference type="InterPro" id="IPR010074">
    <property type="entry name" value="PRibForGlyAmidine_synth_PurL"/>
</dbReference>
<dbReference type="InterPro" id="IPR041609">
    <property type="entry name" value="PurL_linker"/>
</dbReference>
<dbReference type="InterPro" id="IPR010918">
    <property type="entry name" value="PurM-like_C_dom"/>
</dbReference>
<dbReference type="InterPro" id="IPR036676">
    <property type="entry name" value="PurM-like_C_sf"/>
</dbReference>
<dbReference type="InterPro" id="IPR016188">
    <property type="entry name" value="PurM-like_N"/>
</dbReference>
<dbReference type="InterPro" id="IPR036921">
    <property type="entry name" value="PurM-like_N_sf"/>
</dbReference>
<dbReference type="NCBIfam" id="TIGR01736">
    <property type="entry name" value="FGAM_synth_II"/>
    <property type="match status" value="1"/>
</dbReference>
<dbReference type="NCBIfam" id="NF002290">
    <property type="entry name" value="PRK01213.1"/>
    <property type="match status" value="1"/>
</dbReference>
<dbReference type="PANTHER" id="PTHR43555">
    <property type="entry name" value="PHOSPHORIBOSYLFORMYLGLYCINAMIDINE SYNTHASE SUBUNIT PURL"/>
    <property type="match status" value="1"/>
</dbReference>
<dbReference type="PANTHER" id="PTHR43555:SF1">
    <property type="entry name" value="PHOSPHORIBOSYLFORMYLGLYCINAMIDINE SYNTHASE SUBUNIT PURL"/>
    <property type="match status" value="1"/>
</dbReference>
<dbReference type="Pfam" id="PF00586">
    <property type="entry name" value="AIRS"/>
    <property type="match status" value="2"/>
</dbReference>
<dbReference type="Pfam" id="PF02769">
    <property type="entry name" value="AIRS_C"/>
    <property type="match status" value="2"/>
</dbReference>
<dbReference type="Pfam" id="PF18072">
    <property type="entry name" value="FGAR-AT_linker"/>
    <property type="match status" value="1"/>
</dbReference>
<dbReference type="PIRSF" id="PIRSF001587">
    <property type="entry name" value="FGAM_synthase_II"/>
    <property type="match status" value="1"/>
</dbReference>
<dbReference type="SUPFAM" id="SSF56042">
    <property type="entry name" value="PurM C-terminal domain-like"/>
    <property type="match status" value="2"/>
</dbReference>
<dbReference type="SUPFAM" id="SSF55326">
    <property type="entry name" value="PurM N-terminal domain-like"/>
    <property type="match status" value="2"/>
</dbReference>
<organism>
    <name type="scientific">Campylobacter jejuni subsp. jejuni serotype O:23/36 (strain 81-176)</name>
    <dbReference type="NCBI Taxonomy" id="354242"/>
    <lineage>
        <taxon>Bacteria</taxon>
        <taxon>Pseudomonadati</taxon>
        <taxon>Campylobacterota</taxon>
        <taxon>Epsilonproteobacteria</taxon>
        <taxon>Campylobacterales</taxon>
        <taxon>Campylobacteraceae</taxon>
        <taxon>Campylobacter</taxon>
    </lineage>
</organism>
<evidence type="ECO:0000255" key="1">
    <source>
        <dbReference type="HAMAP-Rule" id="MF_00420"/>
    </source>
</evidence>
<comment type="function">
    <text evidence="1">Part of the phosphoribosylformylglycinamidine synthase complex involved in the purines biosynthetic pathway. Catalyzes the ATP-dependent conversion of formylglycinamide ribonucleotide (FGAR) and glutamine to yield formylglycinamidine ribonucleotide (FGAM) and glutamate. The FGAM synthase complex is composed of three subunits. PurQ produces an ammonia molecule by converting glutamine to glutamate. PurL transfers the ammonia molecule to FGAR to form FGAM in an ATP-dependent manner. PurS interacts with PurQ and PurL and is thought to assist in the transfer of the ammonia molecule from PurQ to PurL.</text>
</comment>
<comment type="catalytic activity">
    <reaction evidence="1">
        <text>N(2)-formyl-N(1)-(5-phospho-beta-D-ribosyl)glycinamide + L-glutamine + ATP + H2O = 2-formamido-N(1)-(5-O-phospho-beta-D-ribosyl)acetamidine + L-glutamate + ADP + phosphate + H(+)</text>
        <dbReference type="Rhea" id="RHEA:17129"/>
        <dbReference type="ChEBI" id="CHEBI:15377"/>
        <dbReference type="ChEBI" id="CHEBI:15378"/>
        <dbReference type="ChEBI" id="CHEBI:29985"/>
        <dbReference type="ChEBI" id="CHEBI:30616"/>
        <dbReference type="ChEBI" id="CHEBI:43474"/>
        <dbReference type="ChEBI" id="CHEBI:58359"/>
        <dbReference type="ChEBI" id="CHEBI:147286"/>
        <dbReference type="ChEBI" id="CHEBI:147287"/>
        <dbReference type="ChEBI" id="CHEBI:456216"/>
        <dbReference type="EC" id="6.3.5.3"/>
    </reaction>
</comment>
<comment type="pathway">
    <text evidence="1">Purine metabolism; IMP biosynthesis via de novo pathway; 5-amino-1-(5-phospho-D-ribosyl)imidazole from N(2)-formyl-N(1)-(5-phospho-D-ribosyl)glycinamide: step 1/2.</text>
</comment>
<comment type="subunit">
    <text evidence="1">Monomer. Part of the FGAM synthase complex composed of 1 PurL, 1 PurQ and 2 PurS subunits.</text>
</comment>
<comment type="subcellular location">
    <subcellularLocation>
        <location evidence="1">Cytoplasm</location>
    </subcellularLocation>
</comment>
<comment type="similarity">
    <text evidence="1">Belongs to the FGAMS family.</text>
</comment>